<dbReference type="EC" id="2.1.3.2" evidence="1"/>
<dbReference type="EMBL" id="BX294146">
    <property type="protein sequence ID" value="CAD75355.1"/>
    <property type="molecule type" value="Genomic_DNA"/>
</dbReference>
<dbReference type="RefSeq" id="NP_867808.1">
    <property type="nucleotide sequence ID" value="NC_005027.1"/>
</dbReference>
<dbReference type="RefSeq" id="WP_007327421.1">
    <property type="nucleotide sequence ID" value="NC_005027.1"/>
</dbReference>
<dbReference type="SMR" id="Q7UNR3"/>
<dbReference type="STRING" id="243090.RB7429"/>
<dbReference type="EnsemblBacteria" id="CAD75355">
    <property type="protein sequence ID" value="CAD75355"/>
    <property type="gene ID" value="RB7429"/>
</dbReference>
<dbReference type="KEGG" id="rba:RB7429"/>
<dbReference type="PATRIC" id="fig|243090.15.peg.3583"/>
<dbReference type="eggNOG" id="COG0540">
    <property type="taxonomic scope" value="Bacteria"/>
</dbReference>
<dbReference type="HOGENOM" id="CLU_043846_2_0_0"/>
<dbReference type="InParanoid" id="Q7UNR3"/>
<dbReference type="OrthoDB" id="9802587at2"/>
<dbReference type="UniPathway" id="UPA00070">
    <property type="reaction ID" value="UER00116"/>
</dbReference>
<dbReference type="Proteomes" id="UP000001025">
    <property type="component" value="Chromosome"/>
</dbReference>
<dbReference type="GO" id="GO:0016597">
    <property type="term" value="F:amino acid binding"/>
    <property type="evidence" value="ECO:0007669"/>
    <property type="project" value="InterPro"/>
</dbReference>
<dbReference type="GO" id="GO:0004070">
    <property type="term" value="F:aspartate carbamoyltransferase activity"/>
    <property type="evidence" value="ECO:0007669"/>
    <property type="project" value="UniProtKB-UniRule"/>
</dbReference>
<dbReference type="GO" id="GO:0006207">
    <property type="term" value="P:'de novo' pyrimidine nucleobase biosynthetic process"/>
    <property type="evidence" value="ECO:0007669"/>
    <property type="project" value="InterPro"/>
</dbReference>
<dbReference type="GO" id="GO:0044205">
    <property type="term" value="P:'de novo' UMP biosynthetic process"/>
    <property type="evidence" value="ECO:0007669"/>
    <property type="project" value="UniProtKB-UniRule"/>
</dbReference>
<dbReference type="GO" id="GO:0006520">
    <property type="term" value="P:amino acid metabolic process"/>
    <property type="evidence" value="ECO:0007669"/>
    <property type="project" value="InterPro"/>
</dbReference>
<dbReference type="FunFam" id="3.40.50.1370:FF:000040">
    <property type="entry name" value="Aspartate carbamoyltransferase"/>
    <property type="match status" value="1"/>
</dbReference>
<dbReference type="Gene3D" id="3.40.50.1370">
    <property type="entry name" value="Aspartate/ornithine carbamoyltransferase"/>
    <property type="match status" value="2"/>
</dbReference>
<dbReference type="HAMAP" id="MF_00001">
    <property type="entry name" value="Asp_carb_tr"/>
    <property type="match status" value="1"/>
</dbReference>
<dbReference type="InterPro" id="IPR006132">
    <property type="entry name" value="Asp/Orn_carbamoyltranf_P-bd"/>
</dbReference>
<dbReference type="InterPro" id="IPR006130">
    <property type="entry name" value="Asp/Orn_carbamoylTrfase"/>
</dbReference>
<dbReference type="InterPro" id="IPR036901">
    <property type="entry name" value="Asp/Orn_carbamoylTrfase_sf"/>
</dbReference>
<dbReference type="InterPro" id="IPR002082">
    <property type="entry name" value="Asp_carbamoyltransf"/>
</dbReference>
<dbReference type="InterPro" id="IPR006131">
    <property type="entry name" value="Asp_carbamoyltransf_Asp/Orn-bd"/>
</dbReference>
<dbReference type="NCBIfam" id="TIGR00670">
    <property type="entry name" value="asp_carb_tr"/>
    <property type="match status" value="1"/>
</dbReference>
<dbReference type="NCBIfam" id="NF002032">
    <property type="entry name" value="PRK00856.1"/>
    <property type="match status" value="1"/>
</dbReference>
<dbReference type="PANTHER" id="PTHR45753:SF6">
    <property type="entry name" value="ASPARTATE CARBAMOYLTRANSFERASE"/>
    <property type="match status" value="1"/>
</dbReference>
<dbReference type="PANTHER" id="PTHR45753">
    <property type="entry name" value="ORNITHINE CARBAMOYLTRANSFERASE, MITOCHONDRIAL"/>
    <property type="match status" value="1"/>
</dbReference>
<dbReference type="Pfam" id="PF00185">
    <property type="entry name" value="OTCace"/>
    <property type="match status" value="1"/>
</dbReference>
<dbReference type="Pfam" id="PF02729">
    <property type="entry name" value="OTCace_N"/>
    <property type="match status" value="1"/>
</dbReference>
<dbReference type="PRINTS" id="PR00100">
    <property type="entry name" value="AOTCASE"/>
</dbReference>
<dbReference type="PRINTS" id="PR00101">
    <property type="entry name" value="ATCASE"/>
</dbReference>
<dbReference type="SUPFAM" id="SSF53671">
    <property type="entry name" value="Aspartate/ornithine carbamoyltransferase"/>
    <property type="match status" value="1"/>
</dbReference>
<dbReference type="PROSITE" id="PS00097">
    <property type="entry name" value="CARBAMOYLTRANSFERASE"/>
    <property type="match status" value="1"/>
</dbReference>
<accession>Q7UNR3</accession>
<reference key="1">
    <citation type="journal article" date="2003" name="Proc. Natl. Acad. Sci. U.S.A.">
        <title>Complete genome sequence of the marine planctomycete Pirellula sp. strain 1.</title>
        <authorList>
            <person name="Gloeckner F.O."/>
            <person name="Kube M."/>
            <person name="Bauer M."/>
            <person name="Teeling H."/>
            <person name="Lombardot T."/>
            <person name="Ludwig W."/>
            <person name="Gade D."/>
            <person name="Beck A."/>
            <person name="Borzym K."/>
            <person name="Heitmann K."/>
            <person name="Rabus R."/>
            <person name="Schlesner H."/>
            <person name="Amann R."/>
            <person name="Reinhardt R."/>
        </authorList>
    </citation>
    <scope>NUCLEOTIDE SEQUENCE [LARGE SCALE GENOMIC DNA]</scope>
    <source>
        <strain>DSM 10527 / NCIMB 13988 / SH1</strain>
    </source>
</reference>
<evidence type="ECO:0000255" key="1">
    <source>
        <dbReference type="HAMAP-Rule" id="MF_00001"/>
    </source>
</evidence>
<sequence length="343" mass="37676">MDASLSPDQLSFPAVWRHPHLLDLERLTAAEILAVLRTADQLKTMTEGCRRKVPLLTGKTCANLFFENSTRTRNSFSLAAKRLGADTVEFSSSGSSVAKGETFVDTAKTIEAMGVDWVVTRHSTPGTPHLLARELDCCVLNAGDGPHEHPTQGLLDMLTILQHRIGSDWKNEAADPEKVFAGMTVALVGDIAHSRTARSNLWGLRKLGAHVIICGPPTLVSHRWEELGFEVAHRLDEIVHRCDVLNLLRIQFERQKARPFPSVYEYAALYAMNGERLRLAKDDILIMAPGPINRGVEITPEVADGPHSVILEQVTNGIAVRMASLWLLANAKENADASAENLS</sequence>
<organism>
    <name type="scientific">Rhodopirellula baltica (strain DSM 10527 / NCIMB 13988 / SH1)</name>
    <dbReference type="NCBI Taxonomy" id="243090"/>
    <lineage>
        <taxon>Bacteria</taxon>
        <taxon>Pseudomonadati</taxon>
        <taxon>Planctomycetota</taxon>
        <taxon>Planctomycetia</taxon>
        <taxon>Pirellulales</taxon>
        <taxon>Pirellulaceae</taxon>
        <taxon>Rhodopirellula</taxon>
    </lineage>
</organism>
<comment type="function">
    <text evidence="1">Catalyzes the condensation of carbamoyl phosphate and aspartate to form carbamoyl aspartate and inorganic phosphate, the committed step in the de novo pyrimidine nucleotide biosynthesis pathway.</text>
</comment>
<comment type="catalytic activity">
    <reaction evidence="1">
        <text>carbamoyl phosphate + L-aspartate = N-carbamoyl-L-aspartate + phosphate + H(+)</text>
        <dbReference type="Rhea" id="RHEA:20013"/>
        <dbReference type="ChEBI" id="CHEBI:15378"/>
        <dbReference type="ChEBI" id="CHEBI:29991"/>
        <dbReference type="ChEBI" id="CHEBI:32814"/>
        <dbReference type="ChEBI" id="CHEBI:43474"/>
        <dbReference type="ChEBI" id="CHEBI:58228"/>
        <dbReference type="EC" id="2.1.3.2"/>
    </reaction>
</comment>
<comment type="pathway">
    <text evidence="1">Pyrimidine metabolism; UMP biosynthesis via de novo pathway; (S)-dihydroorotate from bicarbonate: step 2/3.</text>
</comment>
<comment type="subunit">
    <text evidence="1">Heterododecamer (2C3:3R2) of six catalytic PyrB chains organized as two trimers (C3), and six regulatory PyrI chains organized as three dimers (R2).</text>
</comment>
<comment type="similarity">
    <text evidence="1">Belongs to the aspartate/ornithine carbamoyltransferase superfamily. ATCase family.</text>
</comment>
<protein>
    <recommendedName>
        <fullName evidence="1">Aspartate carbamoyltransferase catalytic subunit</fullName>
        <ecNumber evidence="1">2.1.3.2</ecNumber>
    </recommendedName>
    <alternativeName>
        <fullName evidence="1">Aspartate transcarbamylase</fullName>
        <shortName evidence="1">ATCase</shortName>
    </alternativeName>
</protein>
<name>PYRB_RHOBA</name>
<keyword id="KW-0665">Pyrimidine biosynthesis</keyword>
<keyword id="KW-1185">Reference proteome</keyword>
<keyword id="KW-0808">Transferase</keyword>
<gene>
    <name evidence="1" type="primary">pyrB</name>
    <name type="ordered locus">RB7429</name>
</gene>
<proteinExistence type="inferred from homology"/>
<feature type="chain" id="PRO_0000113185" description="Aspartate carbamoyltransferase catalytic subunit">
    <location>
        <begin position="1"/>
        <end position="343"/>
    </location>
</feature>
<feature type="binding site" evidence="1">
    <location>
        <position position="71"/>
    </location>
    <ligand>
        <name>carbamoyl phosphate</name>
        <dbReference type="ChEBI" id="CHEBI:58228"/>
    </ligand>
</feature>
<feature type="binding site" evidence="1">
    <location>
        <position position="72"/>
    </location>
    <ligand>
        <name>carbamoyl phosphate</name>
        <dbReference type="ChEBI" id="CHEBI:58228"/>
    </ligand>
</feature>
<feature type="binding site" evidence="1">
    <location>
        <position position="99"/>
    </location>
    <ligand>
        <name>L-aspartate</name>
        <dbReference type="ChEBI" id="CHEBI:29991"/>
    </ligand>
</feature>
<feature type="binding site" evidence="1">
    <location>
        <position position="121"/>
    </location>
    <ligand>
        <name>carbamoyl phosphate</name>
        <dbReference type="ChEBI" id="CHEBI:58228"/>
    </ligand>
</feature>
<feature type="binding site" evidence="1">
    <location>
        <position position="149"/>
    </location>
    <ligand>
        <name>carbamoyl phosphate</name>
        <dbReference type="ChEBI" id="CHEBI:58228"/>
    </ligand>
</feature>
<feature type="binding site" evidence="1">
    <location>
        <position position="152"/>
    </location>
    <ligand>
        <name>carbamoyl phosphate</name>
        <dbReference type="ChEBI" id="CHEBI:58228"/>
    </ligand>
</feature>
<feature type="binding site" evidence="1">
    <location>
        <position position="195"/>
    </location>
    <ligand>
        <name>L-aspartate</name>
        <dbReference type="ChEBI" id="CHEBI:29991"/>
    </ligand>
</feature>
<feature type="binding site" evidence="1">
    <location>
        <position position="249"/>
    </location>
    <ligand>
        <name>L-aspartate</name>
        <dbReference type="ChEBI" id="CHEBI:29991"/>
    </ligand>
</feature>
<feature type="binding site" evidence="1">
    <location>
        <position position="290"/>
    </location>
    <ligand>
        <name>carbamoyl phosphate</name>
        <dbReference type="ChEBI" id="CHEBI:58228"/>
    </ligand>
</feature>
<feature type="binding site" evidence="1">
    <location>
        <position position="291"/>
    </location>
    <ligand>
        <name>carbamoyl phosphate</name>
        <dbReference type="ChEBI" id="CHEBI:58228"/>
    </ligand>
</feature>